<accession>A3DD94</accession>
<proteinExistence type="inferred from homology"/>
<feature type="chain" id="PRO_1000069954" description="Segregation and condensation protein B">
    <location>
        <begin position="1"/>
        <end position="198"/>
    </location>
</feature>
<dbReference type="EMBL" id="CP000568">
    <property type="protein sequence ID" value="ABN51923.1"/>
    <property type="molecule type" value="Genomic_DNA"/>
</dbReference>
<dbReference type="RefSeq" id="WP_003520983.1">
    <property type="nucleotide sequence ID" value="NC_009012.1"/>
</dbReference>
<dbReference type="SMR" id="A3DD94"/>
<dbReference type="STRING" id="203119.Cthe_0688"/>
<dbReference type="GeneID" id="35805716"/>
<dbReference type="KEGG" id="cth:Cthe_0688"/>
<dbReference type="eggNOG" id="COG1386">
    <property type="taxonomic scope" value="Bacteria"/>
</dbReference>
<dbReference type="HOGENOM" id="CLU_045647_5_3_9"/>
<dbReference type="OrthoDB" id="9806226at2"/>
<dbReference type="Proteomes" id="UP000002145">
    <property type="component" value="Chromosome"/>
</dbReference>
<dbReference type="GO" id="GO:0005737">
    <property type="term" value="C:cytoplasm"/>
    <property type="evidence" value="ECO:0007669"/>
    <property type="project" value="UniProtKB-SubCell"/>
</dbReference>
<dbReference type="GO" id="GO:0051301">
    <property type="term" value="P:cell division"/>
    <property type="evidence" value="ECO:0007669"/>
    <property type="project" value="UniProtKB-KW"/>
</dbReference>
<dbReference type="GO" id="GO:0051304">
    <property type="term" value="P:chromosome separation"/>
    <property type="evidence" value="ECO:0007669"/>
    <property type="project" value="InterPro"/>
</dbReference>
<dbReference type="GO" id="GO:0006260">
    <property type="term" value="P:DNA replication"/>
    <property type="evidence" value="ECO:0007669"/>
    <property type="project" value="UniProtKB-UniRule"/>
</dbReference>
<dbReference type="Gene3D" id="1.10.10.10">
    <property type="entry name" value="Winged helix-like DNA-binding domain superfamily/Winged helix DNA-binding domain"/>
    <property type="match status" value="2"/>
</dbReference>
<dbReference type="HAMAP" id="MF_01804">
    <property type="entry name" value="ScpB"/>
    <property type="match status" value="1"/>
</dbReference>
<dbReference type="InterPro" id="IPR005234">
    <property type="entry name" value="ScpB_csome_segregation"/>
</dbReference>
<dbReference type="InterPro" id="IPR036388">
    <property type="entry name" value="WH-like_DNA-bd_sf"/>
</dbReference>
<dbReference type="InterPro" id="IPR036390">
    <property type="entry name" value="WH_DNA-bd_sf"/>
</dbReference>
<dbReference type="NCBIfam" id="TIGR00281">
    <property type="entry name" value="SMC-Scp complex subunit ScpB"/>
    <property type="match status" value="1"/>
</dbReference>
<dbReference type="PANTHER" id="PTHR34298">
    <property type="entry name" value="SEGREGATION AND CONDENSATION PROTEIN B"/>
    <property type="match status" value="1"/>
</dbReference>
<dbReference type="PANTHER" id="PTHR34298:SF2">
    <property type="entry name" value="SEGREGATION AND CONDENSATION PROTEIN B"/>
    <property type="match status" value="1"/>
</dbReference>
<dbReference type="Pfam" id="PF04079">
    <property type="entry name" value="SMC_ScpB"/>
    <property type="match status" value="1"/>
</dbReference>
<dbReference type="PIRSF" id="PIRSF019345">
    <property type="entry name" value="ScpB"/>
    <property type="match status" value="1"/>
</dbReference>
<dbReference type="SUPFAM" id="SSF46785">
    <property type="entry name" value="Winged helix' DNA-binding domain"/>
    <property type="match status" value="2"/>
</dbReference>
<name>SCPB_ACET2</name>
<organism>
    <name type="scientific">Acetivibrio thermocellus (strain ATCC 27405 / DSM 1237 / JCM 9322 / NBRC 103400 / NCIMB 10682 / NRRL B-4536 / VPI 7372)</name>
    <name type="common">Clostridium thermocellum</name>
    <dbReference type="NCBI Taxonomy" id="203119"/>
    <lineage>
        <taxon>Bacteria</taxon>
        <taxon>Bacillati</taxon>
        <taxon>Bacillota</taxon>
        <taxon>Clostridia</taxon>
        <taxon>Eubacteriales</taxon>
        <taxon>Oscillospiraceae</taxon>
        <taxon>Acetivibrio</taxon>
    </lineage>
</organism>
<keyword id="KW-0131">Cell cycle</keyword>
<keyword id="KW-0132">Cell division</keyword>
<keyword id="KW-0159">Chromosome partition</keyword>
<keyword id="KW-0963">Cytoplasm</keyword>
<keyword id="KW-1185">Reference proteome</keyword>
<gene>
    <name evidence="1" type="primary">scpB</name>
    <name type="ordered locus">Cthe_0688</name>
</gene>
<reference key="1">
    <citation type="submission" date="2007-02" db="EMBL/GenBank/DDBJ databases">
        <title>Complete sequence of Clostridium thermocellum ATCC 27405.</title>
        <authorList>
            <consortium name="US DOE Joint Genome Institute"/>
            <person name="Copeland A."/>
            <person name="Lucas S."/>
            <person name="Lapidus A."/>
            <person name="Barry K."/>
            <person name="Detter J.C."/>
            <person name="Glavina del Rio T."/>
            <person name="Hammon N."/>
            <person name="Israni S."/>
            <person name="Dalin E."/>
            <person name="Tice H."/>
            <person name="Pitluck S."/>
            <person name="Chertkov O."/>
            <person name="Brettin T."/>
            <person name="Bruce D."/>
            <person name="Han C."/>
            <person name="Tapia R."/>
            <person name="Gilna P."/>
            <person name="Schmutz J."/>
            <person name="Larimer F."/>
            <person name="Land M."/>
            <person name="Hauser L."/>
            <person name="Kyrpides N."/>
            <person name="Mikhailova N."/>
            <person name="Wu J.H.D."/>
            <person name="Newcomb M."/>
            <person name="Richardson P."/>
        </authorList>
    </citation>
    <scope>NUCLEOTIDE SEQUENCE [LARGE SCALE GENOMIC DNA]</scope>
    <source>
        <strain>ATCC 27405 / DSM 1237 / JCM 9322 / NBRC 103400 / NCIMB 10682 / NRRL B-4536 / VPI 7372</strain>
    </source>
</reference>
<evidence type="ECO:0000255" key="1">
    <source>
        <dbReference type="HAMAP-Rule" id="MF_01804"/>
    </source>
</evidence>
<protein>
    <recommendedName>
        <fullName evidence="1">Segregation and condensation protein B</fullName>
    </recommendedName>
</protein>
<comment type="function">
    <text evidence="1">Participates in chromosomal partition during cell division. May act via the formation of a condensin-like complex containing Smc and ScpA that pull DNA away from mid-cell into both cell halves.</text>
</comment>
<comment type="subunit">
    <text evidence="1">Homodimer. Homodimerization may be required to stabilize the binding of ScpA to the Smc head domains. Component of a cohesin-like complex composed of ScpA, ScpB and the Smc homodimer, in which ScpA and ScpB bind to the head domain of Smc. The presence of the three proteins is required for the association of the complex with DNA.</text>
</comment>
<comment type="subcellular location">
    <subcellularLocation>
        <location evidence="1">Cytoplasm</location>
    </subcellularLocation>
    <text evidence="1">Associated with two foci at the outer edges of the nucleoid region in young cells, and at four foci within both cell halves in older cells.</text>
</comment>
<comment type="similarity">
    <text evidence="1">Belongs to the ScpB family.</text>
</comment>
<sequence length="198" mass="22440">MDLKKLEGIFEGMLFASGDKVSIEKLSSITGIDKKTVKLVINNMIVKYNNDPSRGITIREINNGYQLCSKPEYYDYIKQLFEPKQRSGLSQAALETLAIIAYNRPITKAKIEQIRGVNSDSAITKLLEKNLIREAGRLDAPGKPVLYETTDEFFRSFGFKSDADLPIFELNDIHETVEINQNSEQEKADTELEKQEKA</sequence>